<feature type="chain" id="PRO_0000128606" description="Large ribosomal subunit protein uL14m">
    <location>
        <begin position="1"/>
        <end position="129"/>
    </location>
</feature>
<proteinExistence type="inferred from homology"/>
<comment type="subunit">
    <text evidence="1">Component of the mitochondrial ribosome large subunit (39S) which comprises a 16S rRNA and about 50 distinct proteins.</text>
</comment>
<comment type="subcellular location">
    <subcellularLocation>
        <location evidence="1">Mitochondrion</location>
    </subcellularLocation>
</comment>
<comment type="similarity">
    <text evidence="2">Belongs to the universal ribosomal protein uL14 family.</text>
</comment>
<accession>O21033</accession>
<protein>
    <recommendedName>
        <fullName evidence="3">Large ribosomal subunit protein uL14m</fullName>
    </recommendedName>
    <alternativeName>
        <fullName>60S ribosomal protein L14, mitochondrial</fullName>
    </alternativeName>
</protein>
<gene>
    <name type="primary">mrpl14</name>
    <name evidence="4" type="synonym">rpl14</name>
    <name type="ORF">DDB_G0294066</name>
</gene>
<reference evidence="4" key="1">
    <citation type="journal article" date="1998" name="Curr. Genet.">
        <title>A ribosomal protein gene cluster is encoded in the mitochondrial DNA of Dictyostelium discoideum: UGA termination codons and similarity of gene order to Acanthamoeba castellanii.</title>
        <authorList>
            <person name="Iwamoto M."/>
            <person name="Pi M."/>
            <person name="Kurihara M."/>
            <person name="Morio T."/>
            <person name="Tanaka Y."/>
        </authorList>
    </citation>
    <scope>NUCLEOTIDE SEQUENCE [GENOMIC DNA]</scope>
    <source>
        <strain evidence="4">AX3</strain>
    </source>
</reference>
<reference evidence="5" key="2">
    <citation type="journal article" date="2000" name="Mol. Gen. Genet.">
        <title>The mitochondrial DNA of Dictyostelium discoideum: complete sequence, gene content and genome organization.</title>
        <authorList>
            <person name="Ogawa S."/>
            <person name="Yoshino R."/>
            <person name="Angata K."/>
            <person name="Iwamoto M."/>
            <person name="Pi M."/>
            <person name="Kuroe K."/>
            <person name="Matsuo K."/>
            <person name="Morio T."/>
            <person name="Urushihara H."/>
            <person name="Yanagisawa K."/>
            <person name="Tanaka Y."/>
        </authorList>
    </citation>
    <scope>NUCLEOTIDE SEQUENCE [LARGE SCALE GENOMIC DNA]</scope>
    <source>
        <strain evidence="5">AX3</strain>
    </source>
</reference>
<keyword id="KW-0496">Mitochondrion</keyword>
<keyword id="KW-1185">Reference proteome</keyword>
<keyword id="KW-0687">Ribonucleoprotein</keyword>
<keyword id="KW-0689">Ribosomal protein</keyword>
<name>RM14_DICDI</name>
<geneLocation type="mitochondrion" evidence="4"/>
<organism>
    <name type="scientific">Dictyostelium discoideum</name>
    <name type="common">Social amoeba</name>
    <dbReference type="NCBI Taxonomy" id="44689"/>
    <lineage>
        <taxon>Eukaryota</taxon>
        <taxon>Amoebozoa</taxon>
        <taxon>Evosea</taxon>
        <taxon>Eumycetozoa</taxon>
        <taxon>Dictyostelia</taxon>
        <taxon>Dictyosteliales</taxon>
        <taxon>Dictyosteliaceae</taxon>
        <taxon>Dictyostelium</taxon>
    </lineage>
</organism>
<evidence type="ECO:0000250" key="1">
    <source>
        <dbReference type="UniProtKB" id="Q6P1L8"/>
    </source>
</evidence>
<evidence type="ECO:0000255" key="2"/>
<evidence type="ECO:0000305" key="3"/>
<evidence type="ECO:0000312" key="4">
    <source>
        <dbReference type="EMBL" id="BAA23570.1"/>
    </source>
</evidence>
<evidence type="ECO:0000312" key="5">
    <source>
        <dbReference type="EMBL" id="BAA78078.1"/>
    </source>
</evidence>
<sequence length="129" mass="14244">MIIKGSNFSVMDNSGARKVQCIQTLEGKKPTSLLRVGDKIVVVIKKMEKRKGGKYKLKVKKSDVCYAVIVKSKQPVRRKSGIIVNAGENGVILLTKTKEPIGTRLTGVVFKEVQRTGLLKNVSISKYII</sequence>
<dbReference type="EMBL" id="D63523">
    <property type="protein sequence ID" value="BAA23570.1"/>
    <property type="molecule type" value="Genomic_DNA"/>
</dbReference>
<dbReference type="EMBL" id="AB000109">
    <property type="protein sequence ID" value="BAA78078.1"/>
    <property type="molecule type" value="Genomic_DNA"/>
</dbReference>
<dbReference type="PIR" id="T43775">
    <property type="entry name" value="T43775"/>
</dbReference>
<dbReference type="RefSeq" id="NP_050096.1">
    <property type="nucleotide sequence ID" value="NC_000895.1"/>
</dbReference>
<dbReference type="SMR" id="O21033"/>
<dbReference type="FunCoup" id="O21033">
    <property type="interactions" value="47"/>
</dbReference>
<dbReference type="STRING" id="44689.O21033"/>
<dbReference type="GeneID" id="2193922"/>
<dbReference type="KEGG" id="ddi:DidioMp29"/>
<dbReference type="dictyBase" id="DDB_G0294066">
    <property type="gene designation" value="mrpl14"/>
</dbReference>
<dbReference type="VEuPathDB" id="AmoebaDB:DidioMp29"/>
<dbReference type="InParanoid" id="O21033"/>
<dbReference type="OMA" id="EWEIART"/>
<dbReference type="PhylomeDB" id="O21033"/>
<dbReference type="PRO" id="PR:O21033"/>
<dbReference type="Proteomes" id="UP000002195">
    <property type="component" value="Mitochondrion"/>
</dbReference>
<dbReference type="GO" id="GO:0005762">
    <property type="term" value="C:mitochondrial large ribosomal subunit"/>
    <property type="evidence" value="ECO:0000250"/>
    <property type="project" value="UniProtKB"/>
</dbReference>
<dbReference type="GO" id="GO:0070180">
    <property type="term" value="F:large ribosomal subunit rRNA binding"/>
    <property type="evidence" value="ECO:0000318"/>
    <property type="project" value="GO_Central"/>
</dbReference>
<dbReference type="GO" id="GO:0003735">
    <property type="term" value="F:structural constituent of ribosome"/>
    <property type="evidence" value="ECO:0000318"/>
    <property type="project" value="GO_Central"/>
</dbReference>
<dbReference type="GO" id="GO:0006412">
    <property type="term" value="P:translation"/>
    <property type="evidence" value="ECO:0000305"/>
    <property type="project" value="UniProtKB"/>
</dbReference>
<dbReference type="CDD" id="cd00337">
    <property type="entry name" value="Ribosomal_uL14"/>
    <property type="match status" value="1"/>
</dbReference>
<dbReference type="Gene3D" id="2.40.150.20">
    <property type="entry name" value="Ribosomal protein L14"/>
    <property type="match status" value="1"/>
</dbReference>
<dbReference type="HAMAP" id="MF_01367">
    <property type="entry name" value="Ribosomal_uL14"/>
    <property type="match status" value="1"/>
</dbReference>
<dbReference type="InterPro" id="IPR000218">
    <property type="entry name" value="Ribosomal_uL14"/>
</dbReference>
<dbReference type="InterPro" id="IPR005745">
    <property type="entry name" value="Ribosomal_uL14_bac-type"/>
</dbReference>
<dbReference type="InterPro" id="IPR036853">
    <property type="entry name" value="Ribosomal_uL14_sf"/>
</dbReference>
<dbReference type="NCBIfam" id="TIGR01067">
    <property type="entry name" value="rplN_bact"/>
    <property type="match status" value="1"/>
</dbReference>
<dbReference type="PANTHER" id="PTHR11761">
    <property type="entry name" value="50S/60S RIBOSOMAL PROTEIN L14/L23"/>
    <property type="match status" value="1"/>
</dbReference>
<dbReference type="PANTHER" id="PTHR11761:SF3">
    <property type="entry name" value="LARGE RIBOSOMAL SUBUNIT PROTEIN UL14M"/>
    <property type="match status" value="1"/>
</dbReference>
<dbReference type="Pfam" id="PF00238">
    <property type="entry name" value="Ribosomal_L14"/>
    <property type="match status" value="1"/>
</dbReference>
<dbReference type="SMART" id="SM01374">
    <property type="entry name" value="Ribosomal_L14"/>
    <property type="match status" value="1"/>
</dbReference>
<dbReference type="SUPFAM" id="SSF50193">
    <property type="entry name" value="Ribosomal protein L14"/>
    <property type="match status" value="1"/>
</dbReference>